<reference key="1">
    <citation type="journal article" date="2006" name="Mol. Biol. Evol.">
        <title>The chloroplast genome sequence of Chara vulgaris sheds new light into the closest green algal relatives of land plants.</title>
        <authorList>
            <person name="Turmel M."/>
            <person name="Otis C."/>
            <person name="Lemieux C."/>
        </authorList>
    </citation>
    <scope>NUCLEOTIDE SEQUENCE [LARGE SCALE GENOMIC DNA]</scope>
</reference>
<proteinExistence type="inferred from homology"/>
<protein>
    <recommendedName>
        <fullName evidence="1">NAD(P)H-quinone oxidoreductase subunit 3, chloroplastic</fullName>
        <ecNumber evidence="1">7.1.1.-</ecNumber>
    </recommendedName>
    <alternativeName>
        <fullName evidence="1">NAD(P)H dehydrogenase subunit 3</fullName>
    </alternativeName>
    <alternativeName>
        <fullName evidence="1">NADH-plastoquinone oxidoreductase subunit 3</fullName>
    </alternativeName>
</protein>
<accession>Q1ACK4</accession>
<sequence>MGTLQEYDYLWFFLVIASIVPILAFTISEILAPIRSGPEKLTSYESGIEPKGQAWIQFHIRYYMFALVFVVFDVETVFLYPWAISFHSLGISAFIEALLFILILMVGLVYAWRKGALEWS</sequence>
<gene>
    <name evidence="1" type="primary">ndhC</name>
</gene>
<keyword id="KW-0150">Chloroplast</keyword>
<keyword id="KW-0472">Membrane</keyword>
<keyword id="KW-0520">NAD</keyword>
<keyword id="KW-0521">NADP</keyword>
<keyword id="KW-0934">Plastid</keyword>
<keyword id="KW-0618">Plastoquinone</keyword>
<keyword id="KW-0874">Quinone</keyword>
<keyword id="KW-0793">Thylakoid</keyword>
<keyword id="KW-1278">Translocase</keyword>
<keyword id="KW-0812">Transmembrane</keyword>
<keyword id="KW-1133">Transmembrane helix</keyword>
<keyword id="KW-0813">Transport</keyword>
<geneLocation type="chloroplast"/>
<comment type="function">
    <text evidence="1">NDH shuttles electrons from NAD(P)H:plastoquinone, via FMN and iron-sulfur (Fe-S) centers, to quinones in the photosynthetic chain and possibly in a chloroplast respiratory chain. The immediate electron acceptor for the enzyme in this species is believed to be plastoquinone. Couples the redox reaction to proton translocation, and thus conserves the redox energy in a proton gradient.</text>
</comment>
<comment type="catalytic activity">
    <reaction evidence="1">
        <text>a plastoquinone + NADH + (n+1) H(+)(in) = a plastoquinol + NAD(+) + n H(+)(out)</text>
        <dbReference type="Rhea" id="RHEA:42608"/>
        <dbReference type="Rhea" id="RHEA-COMP:9561"/>
        <dbReference type="Rhea" id="RHEA-COMP:9562"/>
        <dbReference type="ChEBI" id="CHEBI:15378"/>
        <dbReference type="ChEBI" id="CHEBI:17757"/>
        <dbReference type="ChEBI" id="CHEBI:57540"/>
        <dbReference type="ChEBI" id="CHEBI:57945"/>
        <dbReference type="ChEBI" id="CHEBI:62192"/>
    </reaction>
</comment>
<comment type="catalytic activity">
    <reaction evidence="1">
        <text>a plastoquinone + NADPH + (n+1) H(+)(in) = a plastoquinol + NADP(+) + n H(+)(out)</text>
        <dbReference type="Rhea" id="RHEA:42612"/>
        <dbReference type="Rhea" id="RHEA-COMP:9561"/>
        <dbReference type="Rhea" id="RHEA-COMP:9562"/>
        <dbReference type="ChEBI" id="CHEBI:15378"/>
        <dbReference type="ChEBI" id="CHEBI:17757"/>
        <dbReference type="ChEBI" id="CHEBI:57783"/>
        <dbReference type="ChEBI" id="CHEBI:58349"/>
        <dbReference type="ChEBI" id="CHEBI:62192"/>
    </reaction>
</comment>
<comment type="subunit">
    <text evidence="1">NDH is composed of at least 16 different subunits, 5 of which are encoded in the nucleus.</text>
</comment>
<comment type="subcellular location">
    <subcellularLocation>
        <location evidence="1">Plastid</location>
        <location evidence="1">Chloroplast thylakoid membrane</location>
        <topology evidence="1">Multi-pass membrane protein</topology>
    </subcellularLocation>
</comment>
<comment type="similarity">
    <text evidence="1">Belongs to the complex I subunit 3 family.</text>
</comment>
<feature type="chain" id="PRO_0000362818" description="NAD(P)H-quinone oxidoreductase subunit 3, chloroplastic">
    <location>
        <begin position="1"/>
        <end position="120"/>
    </location>
</feature>
<feature type="transmembrane region" description="Helical" evidence="1">
    <location>
        <begin position="10"/>
        <end position="30"/>
    </location>
</feature>
<feature type="transmembrane region" description="Helical" evidence="1">
    <location>
        <begin position="64"/>
        <end position="84"/>
    </location>
</feature>
<feature type="transmembrane region" description="Helical" evidence="1">
    <location>
        <begin position="89"/>
        <end position="109"/>
    </location>
</feature>
<evidence type="ECO:0000255" key="1">
    <source>
        <dbReference type="HAMAP-Rule" id="MF_01394"/>
    </source>
</evidence>
<organism>
    <name type="scientific">Chara vulgaris</name>
    <name type="common">Common stonewort</name>
    <dbReference type="NCBI Taxonomy" id="55564"/>
    <lineage>
        <taxon>Eukaryota</taxon>
        <taxon>Viridiplantae</taxon>
        <taxon>Streptophyta</taxon>
        <taxon>Charophyceae</taxon>
        <taxon>Charales</taxon>
        <taxon>Characeae</taxon>
        <taxon>Chara</taxon>
    </lineage>
</organism>
<dbReference type="EC" id="7.1.1.-" evidence="1"/>
<dbReference type="EMBL" id="DQ229107">
    <property type="protein sequence ID" value="ABA61913.1"/>
    <property type="molecule type" value="Genomic_DNA"/>
</dbReference>
<dbReference type="RefSeq" id="YP_635743.1">
    <property type="nucleotide sequence ID" value="NC_008097.1"/>
</dbReference>
<dbReference type="SMR" id="Q1ACK4"/>
<dbReference type="GeneID" id="4100283"/>
<dbReference type="GO" id="GO:0009535">
    <property type="term" value="C:chloroplast thylakoid membrane"/>
    <property type="evidence" value="ECO:0007669"/>
    <property type="project" value="UniProtKB-SubCell"/>
</dbReference>
<dbReference type="GO" id="GO:0030964">
    <property type="term" value="C:NADH dehydrogenase complex"/>
    <property type="evidence" value="ECO:0007669"/>
    <property type="project" value="TreeGrafter"/>
</dbReference>
<dbReference type="GO" id="GO:0008137">
    <property type="term" value="F:NADH dehydrogenase (ubiquinone) activity"/>
    <property type="evidence" value="ECO:0007669"/>
    <property type="project" value="InterPro"/>
</dbReference>
<dbReference type="GO" id="GO:0048038">
    <property type="term" value="F:quinone binding"/>
    <property type="evidence" value="ECO:0007669"/>
    <property type="project" value="UniProtKB-KW"/>
</dbReference>
<dbReference type="GO" id="GO:0019684">
    <property type="term" value="P:photosynthesis, light reaction"/>
    <property type="evidence" value="ECO:0007669"/>
    <property type="project" value="UniProtKB-UniRule"/>
</dbReference>
<dbReference type="FunFam" id="1.20.58.1610:FF:000001">
    <property type="entry name" value="NAD(P)H-quinone oxidoreductase subunit 3, chloroplastic"/>
    <property type="match status" value="1"/>
</dbReference>
<dbReference type="Gene3D" id="1.20.58.1610">
    <property type="entry name" value="NADH:ubiquinone/plastoquinone oxidoreductase, chain 3"/>
    <property type="match status" value="1"/>
</dbReference>
<dbReference type="HAMAP" id="MF_01394">
    <property type="entry name" value="NDH1_NuoA"/>
    <property type="match status" value="1"/>
</dbReference>
<dbReference type="InterPro" id="IPR023043">
    <property type="entry name" value="NAD(P)H_OxRDtase_bac/plastid"/>
</dbReference>
<dbReference type="InterPro" id="IPR000440">
    <property type="entry name" value="NADH_UbQ/plastoQ_OxRdtase_su3"/>
</dbReference>
<dbReference type="InterPro" id="IPR038430">
    <property type="entry name" value="NDAH_ubi_oxred_su3_sf"/>
</dbReference>
<dbReference type="PANTHER" id="PTHR11058">
    <property type="entry name" value="NADH-UBIQUINONE OXIDOREDUCTASE CHAIN 3"/>
    <property type="match status" value="1"/>
</dbReference>
<dbReference type="PANTHER" id="PTHR11058:SF9">
    <property type="entry name" value="NADH-UBIQUINONE OXIDOREDUCTASE CHAIN 3"/>
    <property type="match status" value="1"/>
</dbReference>
<dbReference type="Pfam" id="PF00507">
    <property type="entry name" value="Oxidored_q4"/>
    <property type="match status" value="1"/>
</dbReference>
<name>NU3C_CHAVU</name>